<keyword id="KW-0066">ATP synthesis</keyword>
<keyword id="KW-0997">Cell inner membrane</keyword>
<keyword id="KW-1003">Cell membrane</keyword>
<keyword id="KW-0138">CF(0)</keyword>
<keyword id="KW-0375">Hydrogen ion transport</keyword>
<keyword id="KW-0406">Ion transport</keyword>
<keyword id="KW-0472">Membrane</keyword>
<keyword id="KW-0812">Transmembrane</keyword>
<keyword id="KW-1133">Transmembrane helix</keyword>
<keyword id="KW-0813">Transport</keyword>
<dbReference type="EMBL" id="CU928158">
    <property type="protein sequence ID" value="CAQ91469.1"/>
    <property type="molecule type" value="Genomic_DNA"/>
</dbReference>
<dbReference type="RefSeq" id="WP_001052219.1">
    <property type="nucleotide sequence ID" value="NC_011740.1"/>
</dbReference>
<dbReference type="SMR" id="B7LK81"/>
<dbReference type="GeneID" id="93778231"/>
<dbReference type="KEGG" id="efe:EFER_4035"/>
<dbReference type="HOGENOM" id="CLU_079215_4_5_6"/>
<dbReference type="OrthoDB" id="9788020at2"/>
<dbReference type="Proteomes" id="UP000000745">
    <property type="component" value="Chromosome"/>
</dbReference>
<dbReference type="GO" id="GO:0005886">
    <property type="term" value="C:plasma membrane"/>
    <property type="evidence" value="ECO:0007669"/>
    <property type="project" value="UniProtKB-SubCell"/>
</dbReference>
<dbReference type="GO" id="GO:0045259">
    <property type="term" value="C:proton-transporting ATP synthase complex"/>
    <property type="evidence" value="ECO:0007669"/>
    <property type="project" value="UniProtKB-KW"/>
</dbReference>
<dbReference type="GO" id="GO:0046933">
    <property type="term" value="F:proton-transporting ATP synthase activity, rotational mechanism"/>
    <property type="evidence" value="ECO:0007669"/>
    <property type="project" value="UniProtKB-UniRule"/>
</dbReference>
<dbReference type="GO" id="GO:0046961">
    <property type="term" value="F:proton-transporting ATPase activity, rotational mechanism"/>
    <property type="evidence" value="ECO:0007669"/>
    <property type="project" value="TreeGrafter"/>
</dbReference>
<dbReference type="CDD" id="cd06503">
    <property type="entry name" value="ATP-synt_Fo_b"/>
    <property type="match status" value="1"/>
</dbReference>
<dbReference type="FunFam" id="1.20.5.620:FF:000001">
    <property type="entry name" value="ATP synthase subunit b"/>
    <property type="match status" value="1"/>
</dbReference>
<dbReference type="Gene3D" id="1.20.5.620">
    <property type="entry name" value="F1F0 ATP synthase subunit B, membrane domain"/>
    <property type="match status" value="1"/>
</dbReference>
<dbReference type="HAMAP" id="MF_01398">
    <property type="entry name" value="ATP_synth_b_bprime"/>
    <property type="match status" value="1"/>
</dbReference>
<dbReference type="InterPro" id="IPR028987">
    <property type="entry name" value="ATP_synth_B-like_membr_sf"/>
</dbReference>
<dbReference type="InterPro" id="IPR002146">
    <property type="entry name" value="ATP_synth_b/b'su_bac/chlpt"/>
</dbReference>
<dbReference type="InterPro" id="IPR005864">
    <property type="entry name" value="ATP_synth_F0_bsu_bac"/>
</dbReference>
<dbReference type="InterPro" id="IPR050059">
    <property type="entry name" value="ATP_synthase_B_chain"/>
</dbReference>
<dbReference type="NCBIfam" id="TIGR01144">
    <property type="entry name" value="ATP_synt_b"/>
    <property type="match status" value="1"/>
</dbReference>
<dbReference type="NCBIfam" id="NF004411">
    <property type="entry name" value="PRK05759.1-2"/>
    <property type="match status" value="1"/>
</dbReference>
<dbReference type="NCBIfam" id="NF004413">
    <property type="entry name" value="PRK05759.1-4"/>
    <property type="match status" value="1"/>
</dbReference>
<dbReference type="PANTHER" id="PTHR33445:SF1">
    <property type="entry name" value="ATP SYNTHASE SUBUNIT B"/>
    <property type="match status" value="1"/>
</dbReference>
<dbReference type="PANTHER" id="PTHR33445">
    <property type="entry name" value="ATP SYNTHASE SUBUNIT B', CHLOROPLASTIC"/>
    <property type="match status" value="1"/>
</dbReference>
<dbReference type="Pfam" id="PF00430">
    <property type="entry name" value="ATP-synt_B"/>
    <property type="match status" value="1"/>
</dbReference>
<dbReference type="SUPFAM" id="SSF81573">
    <property type="entry name" value="F1F0 ATP synthase subunit B, membrane domain"/>
    <property type="match status" value="1"/>
</dbReference>
<proteinExistence type="inferred from homology"/>
<sequence>MNLNATILGQAIAFVLFVLFCMKYVWPPLMAAIEKRQKEIADGLASAERAHKDLDLAKASATDQLKKAKAEAQVIIEQANKRRSQILDEAKAEAEQERTKIVAQAQAEIEAERKRAREELRKQVAILAVAGAEKIIERSVDEAANSDIVDKLVAEL</sequence>
<organism>
    <name type="scientific">Escherichia fergusonii (strain ATCC 35469 / DSM 13698 / CCUG 18766 / IAM 14443 / JCM 21226 / LMG 7866 / NBRC 102419 / NCTC 12128 / CDC 0568-73)</name>
    <dbReference type="NCBI Taxonomy" id="585054"/>
    <lineage>
        <taxon>Bacteria</taxon>
        <taxon>Pseudomonadati</taxon>
        <taxon>Pseudomonadota</taxon>
        <taxon>Gammaproteobacteria</taxon>
        <taxon>Enterobacterales</taxon>
        <taxon>Enterobacteriaceae</taxon>
        <taxon>Escherichia</taxon>
    </lineage>
</organism>
<reference key="1">
    <citation type="journal article" date="2009" name="PLoS Genet.">
        <title>Organised genome dynamics in the Escherichia coli species results in highly diverse adaptive paths.</title>
        <authorList>
            <person name="Touchon M."/>
            <person name="Hoede C."/>
            <person name="Tenaillon O."/>
            <person name="Barbe V."/>
            <person name="Baeriswyl S."/>
            <person name="Bidet P."/>
            <person name="Bingen E."/>
            <person name="Bonacorsi S."/>
            <person name="Bouchier C."/>
            <person name="Bouvet O."/>
            <person name="Calteau A."/>
            <person name="Chiapello H."/>
            <person name="Clermont O."/>
            <person name="Cruveiller S."/>
            <person name="Danchin A."/>
            <person name="Diard M."/>
            <person name="Dossat C."/>
            <person name="Karoui M.E."/>
            <person name="Frapy E."/>
            <person name="Garry L."/>
            <person name="Ghigo J.M."/>
            <person name="Gilles A.M."/>
            <person name="Johnson J."/>
            <person name="Le Bouguenec C."/>
            <person name="Lescat M."/>
            <person name="Mangenot S."/>
            <person name="Martinez-Jehanne V."/>
            <person name="Matic I."/>
            <person name="Nassif X."/>
            <person name="Oztas S."/>
            <person name="Petit M.A."/>
            <person name="Pichon C."/>
            <person name="Rouy Z."/>
            <person name="Ruf C.S."/>
            <person name="Schneider D."/>
            <person name="Tourret J."/>
            <person name="Vacherie B."/>
            <person name="Vallenet D."/>
            <person name="Medigue C."/>
            <person name="Rocha E.P.C."/>
            <person name="Denamur E."/>
        </authorList>
    </citation>
    <scope>NUCLEOTIDE SEQUENCE [LARGE SCALE GENOMIC DNA]</scope>
    <source>
        <strain>ATCC 35469 / DSM 13698 / BCRC 15582 / CCUG 18766 / IAM 14443 / JCM 21226 / LMG 7866 / NBRC 102419 / NCTC 12128 / CDC 0568-73</strain>
    </source>
</reference>
<comment type="function">
    <text evidence="1">F(1)F(0) ATP synthase produces ATP from ADP in the presence of a proton or sodium gradient. F-type ATPases consist of two structural domains, F(1) containing the extramembraneous catalytic core and F(0) containing the membrane proton channel, linked together by a central stalk and a peripheral stalk. During catalysis, ATP synthesis in the catalytic domain of F(1) is coupled via a rotary mechanism of the central stalk subunits to proton translocation.</text>
</comment>
<comment type="function">
    <text evidence="1">Component of the F(0) channel, it forms part of the peripheral stalk, linking F(1) to F(0).</text>
</comment>
<comment type="subunit">
    <text evidence="1">F-type ATPases have 2 components, F(1) - the catalytic core - and F(0) - the membrane proton channel. F(1) has five subunits: alpha(3), beta(3), gamma(1), delta(1), epsilon(1). F(0) has three main subunits: a(1), b(2) and c(10-14). The alpha and beta chains form an alternating ring which encloses part of the gamma chain. F(1) is attached to F(0) by a central stalk formed by the gamma and epsilon chains, while a peripheral stalk is formed by the delta and b chains.</text>
</comment>
<comment type="subcellular location">
    <subcellularLocation>
        <location evidence="1">Cell inner membrane</location>
        <topology evidence="1">Single-pass membrane protein</topology>
    </subcellularLocation>
</comment>
<comment type="similarity">
    <text evidence="1">Belongs to the ATPase B chain family.</text>
</comment>
<gene>
    <name evidence="1" type="primary">atpF</name>
    <name type="ordered locus">EFER_4035</name>
</gene>
<accession>B7LK81</accession>
<evidence type="ECO:0000255" key="1">
    <source>
        <dbReference type="HAMAP-Rule" id="MF_01398"/>
    </source>
</evidence>
<name>ATPF_ESCF3</name>
<feature type="chain" id="PRO_0000368482" description="ATP synthase subunit b">
    <location>
        <begin position="1"/>
        <end position="156"/>
    </location>
</feature>
<feature type="transmembrane region" description="Helical" evidence="1">
    <location>
        <begin position="11"/>
        <end position="31"/>
    </location>
</feature>
<protein>
    <recommendedName>
        <fullName evidence="1">ATP synthase subunit b</fullName>
    </recommendedName>
    <alternativeName>
        <fullName evidence="1">ATP synthase F(0) sector subunit b</fullName>
    </alternativeName>
    <alternativeName>
        <fullName evidence="1">ATPase subunit I</fullName>
    </alternativeName>
    <alternativeName>
        <fullName evidence="1">F-type ATPase subunit b</fullName>
        <shortName evidence="1">F-ATPase subunit b</shortName>
    </alternativeName>
</protein>